<accession>Q9XCA1</accession>
<protein>
    <recommendedName>
        <fullName evidence="1">ADP-L-glycero-D-manno-heptose-6-epimerase</fullName>
        <ecNumber evidence="1">5.1.3.20</ecNumber>
    </recommendedName>
    <alternativeName>
        <fullName evidence="1">ADP-L-glycero-beta-D-manno-heptose-6-epimerase</fullName>
        <shortName evidence="1">ADP-glyceromanno-heptose 6-epimerase</shortName>
        <shortName evidence="1">ADP-hep 6-epimerase</shortName>
        <shortName evidence="1">AGME</shortName>
    </alternativeName>
</protein>
<dbReference type="EC" id="5.1.3.20" evidence="1"/>
<dbReference type="EMBL" id="AF146532">
    <property type="protein sequence ID" value="AAD37761.1"/>
    <property type="status" value="ALT_FRAME"/>
    <property type="molecule type" value="Genomic_DNA"/>
</dbReference>
<dbReference type="SMR" id="Q9XCA1"/>
<dbReference type="UniPathway" id="UPA00356">
    <property type="reaction ID" value="UER00440"/>
</dbReference>
<dbReference type="UniPathway" id="UPA00958"/>
<dbReference type="GO" id="GO:0008712">
    <property type="term" value="F:ADP-glyceromanno-heptose 6-epimerase activity"/>
    <property type="evidence" value="ECO:0007669"/>
    <property type="project" value="UniProtKB-UniRule"/>
</dbReference>
<dbReference type="GO" id="GO:0050661">
    <property type="term" value="F:NADP binding"/>
    <property type="evidence" value="ECO:0007669"/>
    <property type="project" value="InterPro"/>
</dbReference>
<dbReference type="GO" id="GO:0097171">
    <property type="term" value="P:ADP-L-glycero-beta-D-manno-heptose biosynthetic process"/>
    <property type="evidence" value="ECO:0007669"/>
    <property type="project" value="UniProtKB-UniPathway"/>
</dbReference>
<dbReference type="GO" id="GO:0009244">
    <property type="term" value="P:lipopolysaccharide core region biosynthetic process"/>
    <property type="evidence" value="ECO:0007669"/>
    <property type="project" value="UniProtKB-UniPathway"/>
</dbReference>
<dbReference type="CDD" id="cd05248">
    <property type="entry name" value="ADP_GME_SDR_e"/>
    <property type="match status" value="1"/>
</dbReference>
<dbReference type="Gene3D" id="3.40.50.720">
    <property type="entry name" value="NAD(P)-binding Rossmann-like Domain"/>
    <property type="match status" value="1"/>
</dbReference>
<dbReference type="Gene3D" id="3.90.25.10">
    <property type="entry name" value="UDP-galactose 4-epimerase, domain 1"/>
    <property type="match status" value="1"/>
</dbReference>
<dbReference type="HAMAP" id="MF_01601">
    <property type="entry name" value="Heptose_epimerase"/>
    <property type="match status" value="1"/>
</dbReference>
<dbReference type="InterPro" id="IPR001509">
    <property type="entry name" value="Epimerase_deHydtase"/>
</dbReference>
<dbReference type="InterPro" id="IPR011912">
    <property type="entry name" value="Heptose_epim"/>
</dbReference>
<dbReference type="InterPro" id="IPR036291">
    <property type="entry name" value="NAD(P)-bd_dom_sf"/>
</dbReference>
<dbReference type="NCBIfam" id="TIGR02197">
    <property type="entry name" value="heptose_epim"/>
    <property type="match status" value="1"/>
</dbReference>
<dbReference type="NCBIfam" id="NF008360">
    <property type="entry name" value="PRK11150.1"/>
    <property type="match status" value="1"/>
</dbReference>
<dbReference type="PANTHER" id="PTHR43103:SF3">
    <property type="entry name" value="ADP-L-GLYCERO-D-MANNO-HEPTOSE-6-EPIMERASE"/>
    <property type="match status" value="1"/>
</dbReference>
<dbReference type="PANTHER" id="PTHR43103">
    <property type="entry name" value="NUCLEOSIDE-DIPHOSPHATE-SUGAR EPIMERASE"/>
    <property type="match status" value="1"/>
</dbReference>
<dbReference type="Pfam" id="PF01370">
    <property type="entry name" value="Epimerase"/>
    <property type="match status" value="1"/>
</dbReference>
<dbReference type="SUPFAM" id="SSF51735">
    <property type="entry name" value="NAD(P)-binding Rossmann-fold domains"/>
    <property type="match status" value="1"/>
</dbReference>
<feature type="chain" id="PRO_0000205799" description="ADP-L-glycero-D-manno-heptose-6-epimerase">
    <location>
        <begin position="1"/>
        <end position="310"/>
    </location>
</feature>
<feature type="active site" description="Proton acceptor" evidence="1">
    <location>
        <position position="140"/>
    </location>
</feature>
<feature type="active site" description="Proton acceptor" evidence="1">
    <location>
        <position position="178"/>
    </location>
</feature>
<feature type="binding site" evidence="1">
    <location>
        <begin position="10"/>
        <end position="11"/>
    </location>
    <ligand>
        <name>NADP(+)</name>
        <dbReference type="ChEBI" id="CHEBI:58349"/>
    </ligand>
</feature>
<feature type="binding site" evidence="1">
    <location>
        <begin position="31"/>
        <end position="32"/>
    </location>
    <ligand>
        <name>NADP(+)</name>
        <dbReference type="ChEBI" id="CHEBI:58349"/>
    </ligand>
</feature>
<feature type="binding site" evidence="1">
    <location>
        <position position="38"/>
    </location>
    <ligand>
        <name>NADP(+)</name>
        <dbReference type="ChEBI" id="CHEBI:58349"/>
    </ligand>
</feature>
<feature type="binding site" evidence="1">
    <location>
        <position position="53"/>
    </location>
    <ligand>
        <name>NADP(+)</name>
        <dbReference type="ChEBI" id="CHEBI:58349"/>
    </ligand>
</feature>
<feature type="binding site" evidence="1">
    <location>
        <begin position="75"/>
        <end position="79"/>
    </location>
    <ligand>
        <name>NADP(+)</name>
        <dbReference type="ChEBI" id="CHEBI:58349"/>
    </ligand>
</feature>
<feature type="binding site" evidence="1">
    <location>
        <position position="92"/>
    </location>
    <ligand>
        <name>NADP(+)</name>
        <dbReference type="ChEBI" id="CHEBI:58349"/>
    </ligand>
</feature>
<feature type="binding site" evidence="1">
    <location>
        <position position="144"/>
    </location>
    <ligand>
        <name>NADP(+)</name>
        <dbReference type="ChEBI" id="CHEBI:58349"/>
    </ligand>
</feature>
<feature type="binding site" evidence="1">
    <location>
        <position position="169"/>
    </location>
    <ligand>
        <name>substrate</name>
    </ligand>
</feature>
<feature type="binding site" evidence="1">
    <location>
        <position position="170"/>
    </location>
    <ligand>
        <name>NADP(+)</name>
        <dbReference type="ChEBI" id="CHEBI:58349"/>
    </ligand>
</feature>
<feature type="binding site" evidence="1">
    <location>
        <position position="178"/>
    </location>
    <ligand>
        <name>NADP(+)</name>
        <dbReference type="ChEBI" id="CHEBI:58349"/>
    </ligand>
</feature>
<feature type="binding site" evidence="1">
    <location>
        <position position="180"/>
    </location>
    <ligand>
        <name>substrate</name>
    </ligand>
</feature>
<feature type="binding site" evidence="1">
    <location>
        <position position="187"/>
    </location>
    <ligand>
        <name>substrate</name>
    </ligand>
</feature>
<feature type="binding site" evidence="1">
    <location>
        <begin position="201"/>
        <end position="204"/>
    </location>
    <ligand>
        <name>substrate</name>
    </ligand>
</feature>
<feature type="binding site" evidence="1">
    <location>
        <position position="209"/>
    </location>
    <ligand>
        <name>substrate</name>
    </ligand>
</feature>
<feature type="binding site" evidence="1">
    <location>
        <position position="272"/>
    </location>
    <ligand>
        <name>substrate</name>
    </ligand>
</feature>
<reference key="1">
    <citation type="journal article" date="2001" name="J. Bacteriol.">
        <title>Genetic characterization of the Klebsiella pneumoniae waa gene cluster, involved in core lipopolysaccharide biosynthesis.</title>
        <authorList>
            <person name="Regue M."/>
            <person name="Climent N."/>
            <person name="Abitiu N."/>
            <person name="Coderch N."/>
            <person name="Merino S."/>
            <person name="Izquierdo L."/>
            <person name="Altarriba M."/>
            <person name="Tomas J.M."/>
        </authorList>
    </citation>
    <scope>NUCLEOTIDE SEQUENCE [GENOMIC DNA]</scope>
    <source>
        <strain>O1:K66 / C3</strain>
    </source>
</reference>
<gene>
    <name evidence="1" type="primary">hldD</name>
    <name type="synonym">gmhD</name>
</gene>
<evidence type="ECO:0000255" key="1">
    <source>
        <dbReference type="HAMAP-Rule" id="MF_01601"/>
    </source>
</evidence>
<evidence type="ECO:0000305" key="2"/>
<keyword id="KW-0119">Carbohydrate metabolism</keyword>
<keyword id="KW-0413">Isomerase</keyword>
<keyword id="KW-0521">NADP</keyword>
<proteinExistence type="inferred from homology"/>
<sequence length="310" mass="34965">MIIVTGGAGFIGSNIVKALNDKGITDILVVDNLKDGTKFVNLVDLNIADYMDKEDFLIQIMAGEEFGEIEAIFHEGACSSTTEWDGKYMMDNNYQYSKELLHYCLEREIPFLYASSAATYGGRTSDFIESREYEQPLNVYGYSKFLFDEYVRQILPEANSQIVGFRYFNVYGPREGHKGSMASVAFHLNTQLNNGESPKLFEGSDGFKRDFVYVGDVADVNLWFWENGVSGIFNLGTGRAESFQPVADATLAYHKKGSIEYIPFPDKLKGRYQAFTQADLTNLRKAGYDKPFKTVAEGVTEYMAWLNRDA</sequence>
<comment type="function">
    <text evidence="1">Catalyzes the interconversion between ADP-D-glycero-beta-D-manno-heptose and ADP-L-glycero-beta-D-manno-heptose via an epimerization at carbon 6 of the heptose.</text>
</comment>
<comment type="catalytic activity">
    <reaction evidence="1">
        <text>ADP-D-glycero-beta-D-manno-heptose = ADP-L-glycero-beta-D-manno-heptose</text>
        <dbReference type="Rhea" id="RHEA:17577"/>
        <dbReference type="ChEBI" id="CHEBI:59967"/>
        <dbReference type="ChEBI" id="CHEBI:61506"/>
        <dbReference type="EC" id="5.1.3.20"/>
    </reaction>
</comment>
<comment type="cofactor">
    <cofactor evidence="1">
        <name>NADP(+)</name>
        <dbReference type="ChEBI" id="CHEBI:58349"/>
    </cofactor>
    <text evidence="1">Binds 1 NADP(+) per subunit.</text>
</comment>
<comment type="pathway">
    <text evidence="1">Nucleotide-sugar biosynthesis; ADP-L-glycero-beta-D-manno-heptose biosynthesis; ADP-L-glycero-beta-D-manno-heptose from D-glycero-beta-D-manno-heptose 7-phosphate: step 4/4.</text>
</comment>
<comment type="pathway">
    <text>Bacterial outer membrane biogenesis; LPS core biosynthesis.</text>
</comment>
<comment type="subunit">
    <text evidence="1">Homopentamer.</text>
</comment>
<comment type="domain">
    <text evidence="1">Contains a large N-terminal NADP-binding domain, and a smaller C-terminal substrate-binding domain.</text>
</comment>
<comment type="similarity">
    <text evidence="1">Belongs to the NAD(P)-dependent epimerase/dehydratase family. HldD subfamily.</text>
</comment>
<comment type="sequence caution" evidence="2">
    <conflict type="frameshift">
        <sequence resource="EMBL-CDS" id="AAD37761"/>
    </conflict>
</comment>
<organism>
    <name type="scientific">Klebsiella pneumoniae</name>
    <dbReference type="NCBI Taxonomy" id="573"/>
    <lineage>
        <taxon>Bacteria</taxon>
        <taxon>Pseudomonadati</taxon>
        <taxon>Pseudomonadota</taxon>
        <taxon>Gammaproteobacteria</taxon>
        <taxon>Enterobacterales</taxon>
        <taxon>Enterobacteriaceae</taxon>
        <taxon>Klebsiella/Raoultella group</taxon>
        <taxon>Klebsiella</taxon>
        <taxon>Klebsiella pneumoniae complex</taxon>
    </lineage>
</organism>
<name>HLDD_KLEPN</name>